<keyword id="KW-0030">Aminoacyl-tRNA synthetase</keyword>
<keyword id="KW-0067">ATP-binding</keyword>
<keyword id="KW-0963">Cytoplasm</keyword>
<keyword id="KW-0436">Ligase</keyword>
<keyword id="KW-0479">Metal-binding</keyword>
<keyword id="KW-0547">Nucleotide-binding</keyword>
<keyword id="KW-0648">Protein biosynthesis</keyword>
<keyword id="KW-0694">RNA-binding</keyword>
<keyword id="KW-0820">tRNA-binding</keyword>
<keyword id="KW-0862">Zinc</keyword>
<protein>
    <recommendedName>
        <fullName evidence="1">Alanine--tRNA ligase</fullName>
        <ecNumber evidence="1">6.1.1.7</ecNumber>
    </recommendedName>
    <alternativeName>
        <fullName evidence="1">Alanyl-tRNA synthetase</fullName>
        <shortName evidence="1">AlaRS</shortName>
    </alternativeName>
</protein>
<sequence>MKKLKASEIRQKYLDFFVEKGHMVEPSAPLVPIDDDTLLWINSGVATLKKYFDGRETPKKPRIVNSQKAIRTNDIENVGFTARHHTFFEMLGNFSIGDYFKQEAIEFAWEFLTSDKWMGMEPDKLYVTIHPEDMEAYNIWHKDIGLEESRIIRIEGNFWDIGEGPSGPNTEIFYDRGEAYGQDDPAEEMYPGGENERYLEVWNLVFSEFNHNKDHSYTPLPNKNIDTGMGLERMASVSQNVRTNYETDLFMPIMNEIEKVSGKQYLVNNEQDVAFKVIADHIRTIAFAISDGALPANEGRGYVLRRLLRRAVRFSQTLGINEPFMYKLVDIVADIMEPYYPNVKEKADFIKRVIKSEEERFHETLEDGLAILNELIKKAKATTNEINGKDAFKLYDTYGFPIELTEEIAVQAGLKVDMTTFESEMQQQRDRARQARQNSQSMQVQSEVLKNITSASTFVGYDTATAQTTLTHLIYNGEEVSQVEAGETVYFMLTETPFYAVSGGQVADTGIVYNDNFEIAVSEVTKAPNGQNLHKGVVQFGQVNVGATVSAEVNQNDRRDIQKNHSATHLLHAALKSVLGDHVNQAGSLVEADRLRFDFSHFGPMTNDEIDQVERLVNEEIWKGIDVNIQEMDIASAKEMGAMALFGEKYGDVVRVVNMAPFSIELCGGIHVRNTSEIGLFKIVSESGTGAGVRRIEALTGKAAFLYLEDIQEKFNTMKSQLKVKSDDQVVDKLTQLQDEEKALLKQLEQRDKEITSLKMGNIENQVEEINGYKVLVTEVDVPNAKAIRSTMDDFKSKLQDTIIILASNVDDKVSMVATVPKSLTNNVKAGDLIKQMAPIVGGKGGGRPDMAQGGGTQPENISKSLSFIKDYIKNL</sequence>
<gene>
    <name evidence="1" type="primary">alaS</name>
    <name type="ordered locus">MW1568</name>
</gene>
<dbReference type="EC" id="6.1.1.7" evidence="1"/>
<dbReference type="EMBL" id="BA000033">
    <property type="protein sequence ID" value="BAB95433.1"/>
    <property type="molecule type" value="Genomic_DNA"/>
</dbReference>
<dbReference type="RefSeq" id="WP_000734072.1">
    <property type="nucleotide sequence ID" value="NC_003923.1"/>
</dbReference>
<dbReference type="SMR" id="Q8NW87"/>
<dbReference type="KEGG" id="sam:MW1568"/>
<dbReference type="HOGENOM" id="CLU_004485_1_1_9"/>
<dbReference type="GO" id="GO:0005829">
    <property type="term" value="C:cytosol"/>
    <property type="evidence" value="ECO:0007669"/>
    <property type="project" value="TreeGrafter"/>
</dbReference>
<dbReference type="GO" id="GO:0004813">
    <property type="term" value="F:alanine-tRNA ligase activity"/>
    <property type="evidence" value="ECO:0007669"/>
    <property type="project" value="UniProtKB-UniRule"/>
</dbReference>
<dbReference type="GO" id="GO:0002161">
    <property type="term" value="F:aminoacyl-tRNA deacylase activity"/>
    <property type="evidence" value="ECO:0007669"/>
    <property type="project" value="TreeGrafter"/>
</dbReference>
<dbReference type="GO" id="GO:0005524">
    <property type="term" value="F:ATP binding"/>
    <property type="evidence" value="ECO:0007669"/>
    <property type="project" value="UniProtKB-UniRule"/>
</dbReference>
<dbReference type="GO" id="GO:0140096">
    <property type="term" value="F:catalytic activity, acting on a protein"/>
    <property type="evidence" value="ECO:0007669"/>
    <property type="project" value="UniProtKB-ARBA"/>
</dbReference>
<dbReference type="GO" id="GO:0016740">
    <property type="term" value="F:transferase activity"/>
    <property type="evidence" value="ECO:0007669"/>
    <property type="project" value="UniProtKB-ARBA"/>
</dbReference>
<dbReference type="GO" id="GO:0000049">
    <property type="term" value="F:tRNA binding"/>
    <property type="evidence" value="ECO:0007669"/>
    <property type="project" value="UniProtKB-KW"/>
</dbReference>
<dbReference type="GO" id="GO:0008270">
    <property type="term" value="F:zinc ion binding"/>
    <property type="evidence" value="ECO:0007669"/>
    <property type="project" value="UniProtKB-UniRule"/>
</dbReference>
<dbReference type="GO" id="GO:0006419">
    <property type="term" value="P:alanyl-tRNA aminoacylation"/>
    <property type="evidence" value="ECO:0007669"/>
    <property type="project" value="UniProtKB-UniRule"/>
</dbReference>
<dbReference type="CDD" id="cd00673">
    <property type="entry name" value="AlaRS_core"/>
    <property type="match status" value="1"/>
</dbReference>
<dbReference type="FunFam" id="2.40.30.130:FF:000001">
    <property type="entry name" value="Alanine--tRNA ligase"/>
    <property type="match status" value="1"/>
</dbReference>
<dbReference type="FunFam" id="3.10.310.40:FF:000001">
    <property type="entry name" value="Alanine--tRNA ligase"/>
    <property type="match status" value="1"/>
</dbReference>
<dbReference type="FunFam" id="3.30.54.20:FF:000001">
    <property type="entry name" value="Alanine--tRNA ligase"/>
    <property type="match status" value="1"/>
</dbReference>
<dbReference type="FunFam" id="3.30.930.10:FF:000046">
    <property type="entry name" value="Alanine--tRNA ligase"/>
    <property type="match status" value="1"/>
</dbReference>
<dbReference type="FunFam" id="3.30.980.10:FF:000004">
    <property type="entry name" value="Alanine--tRNA ligase, cytoplasmic"/>
    <property type="match status" value="1"/>
</dbReference>
<dbReference type="Gene3D" id="2.40.30.130">
    <property type="match status" value="1"/>
</dbReference>
<dbReference type="Gene3D" id="3.10.310.40">
    <property type="match status" value="1"/>
</dbReference>
<dbReference type="Gene3D" id="3.30.54.20">
    <property type="match status" value="1"/>
</dbReference>
<dbReference type="Gene3D" id="3.30.930.10">
    <property type="entry name" value="Bira Bifunctional Protein, Domain 2"/>
    <property type="match status" value="1"/>
</dbReference>
<dbReference type="Gene3D" id="3.30.980.10">
    <property type="entry name" value="Threonyl-trna Synthetase, Chain A, domain 2"/>
    <property type="match status" value="1"/>
</dbReference>
<dbReference type="HAMAP" id="MF_00036_B">
    <property type="entry name" value="Ala_tRNA_synth_B"/>
    <property type="match status" value="1"/>
</dbReference>
<dbReference type="InterPro" id="IPR045864">
    <property type="entry name" value="aa-tRNA-synth_II/BPL/LPL"/>
</dbReference>
<dbReference type="InterPro" id="IPR002318">
    <property type="entry name" value="Ala-tRNA-lgiase_IIc"/>
</dbReference>
<dbReference type="InterPro" id="IPR018162">
    <property type="entry name" value="Ala-tRNA-ligase_IIc_anticod-bd"/>
</dbReference>
<dbReference type="InterPro" id="IPR018165">
    <property type="entry name" value="Ala-tRNA-synth_IIc_core"/>
</dbReference>
<dbReference type="InterPro" id="IPR018164">
    <property type="entry name" value="Ala-tRNA-synth_IIc_N"/>
</dbReference>
<dbReference type="InterPro" id="IPR050058">
    <property type="entry name" value="Ala-tRNA_ligase"/>
</dbReference>
<dbReference type="InterPro" id="IPR023033">
    <property type="entry name" value="Ala_tRNA_ligase_euk/bac"/>
</dbReference>
<dbReference type="InterPro" id="IPR003156">
    <property type="entry name" value="DHHA1_dom"/>
</dbReference>
<dbReference type="InterPro" id="IPR018163">
    <property type="entry name" value="Thr/Ala-tRNA-synth_IIc_edit"/>
</dbReference>
<dbReference type="InterPro" id="IPR009000">
    <property type="entry name" value="Transl_B-barrel_sf"/>
</dbReference>
<dbReference type="InterPro" id="IPR012947">
    <property type="entry name" value="tRNA_SAD"/>
</dbReference>
<dbReference type="NCBIfam" id="TIGR00344">
    <property type="entry name" value="alaS"/>
    <property type="match status" value="1"/>
</dbReference>
<dbReference type="PANTHER" id="PTHR11777:SF9">
    <property type="entry name" value="ALANINE--TRNA LIGASE, CYTOPLASMIC"/>
    <property type="match status" value="1"/>
</dbReference>
<dbReference type="PANTHER" id="PTHR11777">
    <property type="entry name" value="ALANYL-TRNA SYNTHETASE"/>
    <property type="match status" value="1"/>
</dbReference>
<dbReference type="Pfam" id="PF02272">
    <property type="entry name" value="DHHA1"/>
    <property type="match status" value="1"/>
</dbReference>
<dbReference type="Pfam" id="PF01411">
    <property type="entry name" value="tRNA-synt_2c"/>
    <property type="match status" value="1"/>
</dbReference>
<dbReference type="Pfam" id="PF07973">
    <property type="entry name" value="tRNA_SAD"/>
    <property type="match status" value="1"/>
</dbReference>
<dbReference type="PRINTS" id="PR00980">
    <property type="entry name" value="TRNASYNTHALA"/>
</dbReference>
<dbReference type="SMART" id="SM00863">
    <property type="entry name" value="tRNA_SAD"/>
    <property type="match status" value="1"/>
</dbReference>
<dbReference type="SUPFAM" id="SSF55681">
    <property type="entry name" value="Class II aaRS and biotin synthetases"/>
    <property type="match status" value="1"/>
</dbReference>
<dbReference type="SUPFAM" id="SSF101353">
    <property type="entry name" value="Putative anticodon-binding domain of alanyl-tRNA synthetase (AlaRS)"/>
    <property type="match status" value="1"/>
</dbReference>
<dbReference type="SUPFAM" id="SSF55186">
    <property type="entry name" value="ThrRS/AlaRS common domain"/>
    <property type="match status" value="1"/>
</dbReference>
<dbReference type="SUPFAM" id="SSF50447">
    <property type="entry name" value="Translation proteins"/>
    <property type="match status" value="1"/>
</dbReference>
<dbReference type="PROSITE" id="PS50860">
    <property type="entry name" value="AA_TRNA_LIGASE_II_ALA"/>
    <property type="match status" value="1"/>
</dbReference>
<feature type="chain" id="PRO_0000075205" description="Alanine--tRNA ligase">
    <location>
        <begin position="1"/>
        <end position="876"/>
    </location>
</feature>
<feature type="binding site" evidence="1">
    <location>
        <position position="565"/>
    </location>
    <ligand>
        <name>Zn(2+)</name>
        <dbReference type="ChEBI" id="CHEBI:29105"/>
    </ligand>
</feature>
<feature type="binding site" evidence="1">
    <location>
        <position position="569"/>
    </location>
    <ligand>
        <name>Zn(2+)</name>
        <dbReference type="ChEBI" id="CHEBI:29105"/>
    </ligand>
</feature>
<feature type="binding site" evidence="1">
    <location>
        <position position="667"/>
    </location>
    <ligand>
        <name>Zn(2+)</name>
        <dbReference type="ChEBI" id="CHEBI:29105"/>
    </ligand>
</feature>
<feature type="binding site" evidence="1">
    <location>
        <position position="671"/>
    </location>
    <ligand>
        <name>Zn(2+)</name>
        <dbReference type="ChEBI" id="CHEBI:29105"/>
    </ligand>
</feature>
<reference key="1">
    <citation type="journal article" date="2002" name="Lancet">
        <title>Genome and virulence determinants of high virulence community-acquired MRSA.</title>
        <authorList>
            <person name="Baba T."/>
            <person name="Takeuchi F."/>
            <person name="Kuroda M."/>
            <person name="Yuzawa H."/>
            <person name="Aoki K."/>
            <person name="Oguchi A."/>
            <person name="Nagai Y."/>
            <person name="Iwama N."/>
            <person name="Asano K."/>
            <person name="Naimi T."/>
            <person name="Kuroda H."/>
            <person name="Cui L."/>
            <person name="Yamamoto K."/>
            <person name="Hiramatsu K."/>
        </authorList>
    </citation>
    <scope>NUCLEOTIDE SEQUENCE [LARGE SCALE GENOMIC DNA]</scope>
    <source>
        <strain>MW2</strain>
    </source>
</reference>
<evidence type="ECO:0000255" key="1">
    <source>
        <dbReference type="HAMAP-Rule" id="MF_00036"/>
    </source>
</evidence>
<accession>Q8NW87</accession>
<name>SYA_STAAW</name>
<comment type="function">
    <text evidence="1">Catalyzes the attachment of alanine to tRNA(Ala) in a two-step reaction: alanine is first activated by ATP to form Ala-AMP and then transferred to the acceptor end of tRNA(Ala). Also edits incorrectly charged Ser-tRNA(Ala) and Gly-tRNA(Ala) via its editing domain.</text>
</comment>
<comment type="catalytic activity">
    <reaction evidence="1">
        <text>tRNA(Ala) + L-alanine + ATP = L-alanyl-tRNA(Ala) + AMP + diphosphate</text>
        <dbReference type="Rhea" id="RHEA:12540"/>
        <dbReference type="Rhea" id="RHEA-COMP:9657"/>
        <dbReference type="Rhea" id="RHEA-COMP:9923"/>
        <dbReference type="ChEBI" id="CHEBI:30616"/>
        <dbReference type="ChEBI" id="CHEBI:33019"/>
        <dbReference type="ChEBI" id="CHEBI:57972"/>
        <dbReference type="ChEBI" id="CHEBI:78442"/>
        <dbReference type="ChEBI" id="CHEBI:78497"/>
        <dbReference type="ChEBI" id="CHEBI:456215"/>
        <dbReference type="EC" id="6.1.1.7"/>
    </reaction>
</comment>
<comment type="cofactor">
    <cofactor evidence="1">
        <name>Zn(2+)</name>
        <dbReference type="ChEBI" id="CHEBI:29105"/>
    </cofactor>
    <text evidence="1">Binds 1 zinc ion per subunit.</text>
</comment>
<comment type="subcellular location">
    <subcellularLocation>
        <location evidence="1">Cytoplasm</location>
    </subcellularLocation>
</comment>
<comment type="domain">
    <text evidence="1">Consists of three domains; the N-terminal catalytic domain, the editing domain and the C-terminal C-Ala domain. The editing domain removes incorrectly charged amino acids, while the C-Ala domain, along with tRNA(Ala), serves as a bridge to cooperatively bring together the editing and aminoacylation centers thus stimulating deacylation of misacylated tRNAs.</text>
</comment>
<comment type="similarity">
    <text evidence="1">Belongs to the class-II aminoacyl-tRNA synthetase family.</text>
</comment>
<proteinExistence type="inferred from homology"/>
<organism>
    <name type="scientific">Staphylococcus aureus (strain MW2)</name>
    <dbReference type="NCBI Taxonomy" id="196620"/>
    <lineage>
        <taxon>Bacteria</taxon>
        <taxon>Bacillati</taxon>
        <taxon>Bacillota</taxon>
        <taxon>Bacilli</taxon>
        <taxon>Bacillales</taxon>
        <taxon>Staphylococcaceae</taxon>
        <taxon>Staphylococcus</taxon>
    </lineage>
</organism>